<keyword id="KW-0001">2Fe-2S</keyword>
<keyword id="KW-0153">Cholesterol metabolism</keyword>
<keyword id="KW-0408">Iron</keyword>
<keyword id="KW-0411">Iron-sulfur</keyword>
<keyword id="KW-0443">Lipid metabolism</keyword>
<keyword id="KW-0472">Membrane</keyword>
<keyword id="KW-0479">Metal-binding</keyword>
<keyword id="KW-0560">Oxidoreductase</keyword>
<keyword id="KW-1185">Reference proteome</keyword>
<keyword id="KW-0753">Steroid metabolism</keyword>
<keyword id="KW-1207">Sterol metabolism</keyword>
<keyword id="KW-0812">Transmembrane</keyword>
<keyword id="KW-1133">Transmembrane helix</keyword>
<dbReference type="EC" id="1.14.19.21" evidence="3"/>
<dbReference type="EMBL" id="AB607953">
    <property type="protein sequence ID" value="BAK39962.1"/>
    <property type="molecule type" value="mRNA"/>
</dbReference>
<dbReference type="EMBL" id="EAAA01003003">
    <property type="status" value="NOT_ANNOTATED_CDS"/>
    <property type="molecule type" value="Genomic_DNA"/>
</dbReference>
<dbReference type="RefSeq" id="NP_001265912.1">
    <property type="nucleotide sequence ID" value="NM_001278983.1"/>
</dbReference>
<dbReference type="SMR" id="F7J187"/>
<dbReference type="STRING" id="7719.ENSCINP00000013559"/>
<dbReference type="SwissLipids" id="SLP:000001122"/>
<dbReference type="GeneID" id="100176071"/>
<dbReference type="KEGG" id="cin:100176071"/>
<dbReference type="eggNOG" id="ENOG502QS20">
    <property type="taxonomic scope" value="Eukaryota"/>
</dbReference>
<dbReference type="HOGENOM" id="CLU_037178_0_0_1"/>
<dbReference type="InParanoid" id="F7J187"/>
<dbReference type="OrthoDB" id="426882at2759"/>
<dbReference type="TreeFam" id="TF313257"/>
<dbReference type="UniPathway" id="UPA01020"/>
<dbReference type="Proteomes" id="UP000008144">
    <property type="component" value="Unplaced"/>
</dbReference>
<dbReference type="GO" id="GO:0005737">
    <property type="term" value="C:cytoplasm"/>
    <property type="evidence" value="ECO:0000318"/>
    <property type="project" value="GO_Central"/>
</dbReference>
<dbReference type="GO" id="GO:0016020">
    <property type="term" value="C:membrane"/>
    <property type="evidence" value="ECO:0007669"/>
    <property type="project" value="UniProtKB-SubCell"/>
</dbReference>
<dbReference type="GO" id="GO:0051537">
    <property type="term" value="F:2 iron, 2 sulfur cluster binding"/>
    <property type="evidence" value="ECO:0007669"/>
    <property type="project" value="UniProtKB-KW"/>
</dbReference>
<dbReference type="GO" id="GO:0170056">
    <property type="term" value="F:cholesterol 7-desaturase (NAD(P)H) activity"/>
    <property type="evidence" value="ECO:0007669"/>
    <property type="project" value="UniProtKB-EC"/>
</dbReference>
<dbReference type="GO" id="GO:0046872">
    <property type="term" value="F:metal ion binding"/>
    <property type="evidence" value="ECO:0007669"/>
    <property type="project" value="UniProtKB-KW"/>
</dbReference>
<dbReference type="GO" id="GO:0016491">
    <property type="term" value="F:oxidoreductase activity"/>
    <property type="evidence" value="ECO:0000318"/>
    <property type="project" value="GO_Central"/>
</dbReference>
<dbReference type="GO" id="GO:0008203">
    <property type="term" value="P:cholesterol metabolic process"/>
    <property type="evidence" value="ECO:0007669"/>
    <property type="project" value="UniProtKB-KW"/>
</dbReference>
<dbReference type="CDD" id="cd03469">
    <property type="entry name" value="Rieske_RO_Alpha_N"/>
    <property type="match status" value="1"/>
</dbReference>
<dbReference type="Gene3D" id="3.90.380.10">
    <property type="entry name" value="Naphthalene 1,2-dioxygenase Alpha Subunit, Chain A, domain 1"/>
    <property type="match status" value="1"/>
</dbReference>
<dbReference type="Gene3D" id="2.102.10.10">
    <property type="entry name" value="Rieske [2Fe-2S] iron-sulphur domain"/>
    <property type="match status" value="1"/>
</dbReference>
<dbReference type="InterPro" id="IPR050584">
    <property type="entry name" value="Cholesterol_7-desaturase"/>
</dbReference>
<dbReference type="InterPro" id="IPR045605">
    <property type="entry name" value="KshA-like_C"/>
</dbReference>
<dbReference type="InterPro" id="IPR017941">
    <property type="entry name" value="Rieske_2Fe-2S"/>
</dbReference>
<dbReference type="InterPro" id="IPR036922">
    <property type="entry name" value="Rieske_2Fe-2S_sf"/>
</dbReference>
<dbReference type="PANTHER" id="PTHR21266:SF32">
    <property type="entry name" value="CHOLESTEROL 7-DESATURASE NVD"/>
    <property type="match status" value="1"/>
</dbReference>
<dbReference type="PANTHER" id="PTHR21266">
    <property type="entry name" value="IRON-SULFUR DOMAIN CONTAINING PROTEIN"/>
    <property type="match status" value="1"/>
</dbReference>
<dbReference type="Pfam" id="PF19298">
    <property type="entry name" value="KshA_C"/>
    <property type="match status" value="1"/>
</dbReference>
<dbReference type="Pfam" id="PF00355">
    <property type="entry name" value="Rieske"/>
    <property type="match status" value="1"/>
</dbReference>
<dbReference type="SUPFAM" id="SSF50022">
    <property type="entry name" value="ISP domain"/>
    <property type="match status" value="1"/>
</dbReference>
<dbReference type="PROSITE" id="PS51296">
    <property type="entry name" value="RIESKE"/>
    <property type="match status" value="1"/>
</dbReference>
<reference key="1">
    <citation type="journal article" date="2011" name="J. Biol. Chem.">
        <title>The conserved Rieske oxygenase DAF-36/Neverland is a novel cholesterol-metabolizing enzyme.</title>
        <authorList>
            <person name="Yoshiyama-Yanagawa T."/>
            <person name="Enya S."/>
            <person name="Shimada-Niwa Y."/>
            <person name="Yaguchi S."/>
            <person name="Haramoto Y."/>
            <person name="Matsuya T."/>
            <person name="Shiomi K."/>
            <person name="Sasakura Y."/>
            <person name="Takahashi S."/>
            <person name="Asashima M."/>
            <person name="Kataoka H."/>
            <person name="Niwa R."/>
        </authorList>
    </citation>
    <scope>NUCLEOTIDE SEQUENCE [MRNA]</scope>
    <scope>FUNCTION</scope>
    <scope>CATALYTIC ACTIVITY</scope>
    <scope>PATHWAY</scope>
    <source>
        <tissue evidence="7">Embryo</tissue>
    </source>
</reference>
<reference key="2">
    <citation type="journal article" date="2002" name="Science">
        <title>The draft genome of Ciona intestinalis: insights into chordate and vertebrate origins.</title>
        <authorList>
            <person name="Dehal P."/>
            <person name="Satou Y."/>
            <person name="Campbell R.K."/>
            <person name="Chapman J."/>
            <person name="Degnan B."/>
            <person name="De Tomaso A."/>
            <person name="Davidson B."/>
            <person name="Di Gregorio A."/>
            <person name="Gelpke M."/>
            <person name="Goodstein D.M."/>
            <person name="Harafuji N."/>
            <person name="Hastings K.E."/>
            <person name="Ho I."/>
            <person name="Hotta K."/>
            <person name="Huang W."/>
            <person name="Kawashima T."/>
            <person name="Lemaire P."/>
            <person name="Martinez D."/>
            <person name="Meinertzhagen I.A."/>
            <person name="Necula S."/>
            <person name="Nonaka M."/>
            <person name="Putnam N."/>
            <person name="Rash S."/>
            <person name="Saiga H."/>
            <person name="Satake M."/>
            <person name="Terry A."/>
            <person name="Yamada L."/>
            <person name="Wang H.G."/>
            <person name="Awazu S."/>
            <person name="Azumi K."/>
            <person name="Boore J."/>
            <person name="Branno M."/>
            <person name="Chin-Bow S."/>
            <person name="DeSantis R."/>
            <person name="Doyle S."/>
            <person name="Francino P."/>
            <person name="Keys D.N."/>
            <person name="Haga S."/>
            <person name="Hayashi H."/>
            <person name="Hino K."/>
            <person name="Imai K.S."/>
            <person name="Inaba K."/>
            <person name="Kano S."/>
            <person name="Kobayashi K."/>
            <person name="Kobayashi M."/>
            <person name="Lee B.I."/>
            <person name="Makabe K.W."/>
            <person name="Manohar C."/>
            <person name="Matassi G."/>
            <person name="Medina M."/>
            <person name="Mochizuki Y."/>
            <person name="Mount S."/>
            <person name="Morishita T."/>
            <person name="Miura S."/>
            <person name="Nakayama A."/>
            <person name="Nishizaka S."/>
            <person name="Nomoto H."/>
            <person name="Ohta F."/>
            <person name="Oishi K."/>
            <person name="Rigoutsos I."/>
            <person name="Sano M."/>
            <person name="Sasaki A."/>
            <person name="Sasakura Y."/>
            <person name="Shoguchi E."/>
            <person name="Shin-i T."/>
            <person name="Spagnuolo A."/>
            <person name="Stainier D."/>
            <person name="Suzuki M.M."/>
            <person name="Tassy O."/>
            <person name="Takatori N."/>
            <person name="Tokuoka M."/>
            <person name="Yagi K."/>
            <person name="Yoshizaki F."/>
            <person name="Wada S."/>
            <person name="Zhang C."/>
            <person name="Hyatt P.D."/>
            <person name="Larimer F."/>
            <person name="Detter C."/>
            <person name="Doggett N."/>
            <person name="Glavina T."/>
            <person name="Hawkins T."/>
            <person name="Richardson P."/>
            <person name="Lucas S."/>
            <person name="Kohara Y."/>
            <person name="Levine M."/>
            <person name="Satoh N."/>
            <person name="Rokhsar D.S."/>
        </authorList>
    </citation>
    <scope>NUCLEOTIDE SEQUENCE [LARGE SCALE GENOMIC DNA]</scope>
</reference>
<gene>
    <name evidence="7" type="primary">nvd-Ci-2</name>
</gene>
<accession>F7J187</accession>
<accession>A0A1W2W3G7</accession>
<accession>F6QUZ6</accession>
<name>NVD2_CIOIN</name>
<protein>
    <recommendedName>
        <fullName>Cholesterol 7-desaturase nvd 2</fullName>
        <ecNumber evidence="3">1.14.19.21</ecNumber>
    </recommendedName>
    <alternativeName>
        <fullName evidence="4">Neverland 2</fullName>
        <shortName evidence="4">Nvd-Ci-2</shortName>
    </alternativeName>
</protein>
<evidence type="ECO:0000255" key="1"/>
<evidence type="ECO:0000255" key="2">
    <source>
        <dbReference type="PROSITE-ProRule" id="PRU00628"/>
    </source>
</evidence>
<evidence type="ECO:0000269" key="3">
    <source>
    </source>
</evidence>
<evidence type="ECO:0000303" key="4">
    <source>
    </source>
</evidence>
<evidence type="ECO:0000305" key="5"/>
<evidence type="ECO:0000305" key="6">
    <source>
    </source>
</evidence>
<evidence type="ECO:0000312" key="7">
    <source>
        <dbReference type="EMBL" id="BAK39962.1"/>
    </source>
</evidence>
<organism>
    <name type="scientific">Ciona intestinalis</name>
    <name type="common">Transparent sea squirt</name>
    <name type="synonym">Ascidia intestinalis</name>
    <dbReference type="NCBI Taxonomy" id="7719"/>
    <lineage>
        <taxon>Eukaryota</taxon>
        <taxon>Metazoa</taxon>
        <taxon>Chordata</taxon>
        <taxon>Tunicata</taxon>
        <taxon>Ascidiacea</taxon>
        <taxon>Phlebobranchia</taxon>
        <taxon>Cionidae</taxon>
        <taxon>Ciona</taxon>
    </lineage>
</organism>
<comment type="function">
    <text evidence="3">Catalyzes the production of 7-dehydrocholesterol (7-DHC or cholesta-5,7-dien-3beta-ol) by inserting a double bond (desaturating) at the C7-C8 single bond of cholesterol. Essential regulator of steroid biosynthesis as this reaction is the first step in the synthesis of the steroid hormone Delta(7)-dafachronic acid.</text>
</comment>
<comment type="catalytic activity">
    <reaction evidence="3">
        <text>cholesterol + NADPH + O2 + H(+) = 7-dehydrocholesterol + NADP(+) + 2 H2O</text>
        <dbReference type="Rhea" id="RHEA:45024"/>
        <dbReference type="ChEBI" id="CHEBI:15377"/>
        <dbReference type="ChEBI" id="CHEBI:15378"/>
        <dbReference type="ChEBI" id="CHEBI:15379"/>
        <dbReference type="ChEBI" id="CHEBI:16113"/>
        <dbReference type="ChEBI" id="CHEBI:17759"/>
        <dbReference type="ChEBI" id="CHEBI:57783"/>
        <dbReference type="ChEBI" id="CHEBI:58349"/>
        <dbReference type="EC" id="1.14.19.21"/>
    </reaction>
    <physiologicalReaction direction="left-to-right" evidence="6">
        <dbReference type="Rhea" id="RHEA:45025"/>
    </physiologicalReaction>
</comment>
<comment type="catalytic activity">
    <reaction evidence="3">
        <text>cholesterol + NADH + O2 + H(+) = 7-dehydrocholesterol + NAD(+) + 2 H2O</text>
        <dbReference type="Rhea" id="RHEA:51644"/>
        <dbReference type="ChEBI" id="CHEBI:15377"/>
        <dbReference type="ChEBI" id="CHEBI:15378"/>
        <dbReference type="ChEBI" id="CHEBI:15379"/>
        <dbReference type="ChEBI" id="CHEBI:16113"/>
        <dbReference type="ChEBI" id="CHEBI:17759"/>
        <dbReference type="ChEBI" id="CHEBI:57540"/>
        <dbReference type="ChEBI" id="CHEBI:57945"/>
        <dbReference type="EC" id="1.14.19.21"/>
    </reaction>
    <physiologicalReaction direction="left-to-right" evidence="6">
        <dbReference type="Rhea" id="RHEA:51645"/>
    </physiologicalReaction>
</comment>
<comment type="cofactor">
    <cofactor evidence="2">
        <name>[2Fe-2S] cluster</name>
        <dbReference type="ChEBI" id="CHEBI:190135"/>
    </cofactor>
    <text evidence="2">Binds 1 [2Fe-2S] cluster per subunit.</text>
</comment>
<comment type="pathway">
    <text evidence="6">Steroid hormone biosynthesis; dafachronic acid biosynthesis.</text>
</comment>
<comment type="subcellular location">
    <subcellularLocation>
        <location evidence="1">Membrane</location>
        <topology evidence="1">Multi-pass membrane protein</topology>
    </subcellularLocation>
</comment>
<comment type="similarity">
    <text evidence="5">Belongs to the cholesterol 7-desaturase family.</text>
</comment>
<comment type="sequence caution" evidence="5">
    <conflict type="erroneous gene model prediction">
        <sequence resource="EMBL" id="EAAA01003003"/>
    </conflict>
</comment>
<sequence>MLIEYLIRITVMVITSERLLILMGLCDESFHFPVMIRVVFNAAVAIVIALVMSKLYKVLFAPLDLRRKLEDVGYVHHDHSVSREENIRDTQRRKKLGNTPPVFPNGWFKVADSTWIKKGQVKSIYFFGEQLALFRNKRGLLRALDAYCPHLLANMAAGGKVVNSDCLECPFHGWKFSGETGKLVDVPYAQKVPTFVSVKKWSCCEVDGMAYLWYHCDGGEPKWVLPSSVTINTLKYAGKTEHIINSHIQDIPENAADISHLDHLHKPVIGSDVEKTNESLLNNLIFHSIQASWKPPTDPNEPHRSTMSIKDNIHLSIFNIKIPLLYLEFEIDQIGPGAVHIHVRTPFFRGLMLQNVTPIEPFVQKLTHSFYVSPWVPVCIAKAFYLLETTQIERDILMWNNKTYFRQPVLVKEESALAKHRRWYQQFYSENSPRMNHRGDLVYPGKPKLADW</sequence>
<feature type="chain" id="PRO_0000452608" description="Cholesterol 7-desaturase nvd 2">
    <location>
        <begin position="1"/>
        <end position="452"/>
    </location>
</feature>
<feature type="transmembrane region" description="Helical" evidence="1">
    <location>
        <begin position="6"/>
        <end position="26"/>
    </location>
</feature>
<feature type="transmembrane region" description="Helical" evidence="1">
    <location>
        <begin position="32"/>
        <end position="52"/>
    </location>
</feature>
<feature type="domain" description="Rieske" evidence="2">
    <location>
        <begin position="107"/>
        <end position="212"/>
    </location>
</feature>
<feature type="binding site" evidence="2">
    <location>
        <position position="148"/>
    </location>
    <ligand>
        <name>[2Fe-2S] cluster</name>
        <dbReference type="ChEBI" id="CHEBI:190135"/>
    </ligand>
</feature>
<feature type="binding site" evidence="2">
    <location>
        <position position="150"/>
    </location>
    <ligand>
        <name>[2Fe-2S] cluster</name>
        <dbReference type="ChEBI" id="CHEBI:190135"/>
    </ligand>
</feature>
<feature type="binding site" evidence="2">
    <location>
        <position position="169"/>
    </location>
    <ligand>
        <name>[2Fe-2S] cluster</name>
        <dbReference type="ChEBI" id="CHEBI:190135"/>
    </ligand>
</feature>
<feature type="binding site" evidence="2">
    <location>
        <position position="172"/>
    </location>
    <ligand>
        <name>[2Fe-2S] cluster</name>
        <dbReference type="ChEBI" id="CHEBI:190135"/>
    </ligand>
</feature>
<feature type="sequence conflict" description="In Ref. 1; BAK39962." ref="1">
    <original>K</original>
    <variation>E</variation>
    <location>
        <position position="117"/>
    </location>
</feature>
<feature type="sequence conflict" description="In Ref. 1; BAK39962." ref="1">
    <original>L</original>
    <variation>G</variation>
    <location>
        <position position="152"/>
    </location>
</feature>
<proteinExistence type="evidence at protein level"/>